<proteinExistence type="evidence at protein level"/>
<protein>
    <recommendedName>
        <fullName>Desmocollin-3</fullName>
    </recommendedName>
</protein>
<dbReference type="EMBL" id="L33774">
    <property type="protein sequence ID" value="AAC41625.1"/>
    <property type="molecule type" value="mRNA"/>
</dbReference>
<dbReference type="EMBL" id="L33774">
    <property type="protein sequence ID" value="AAC41626.1"/>
    <property type="molecule type" value="mRNA"/>
</dbReference>
<dbReference type="EMBL" id="X75783">
    <property type="protein sequence ID" value="CAA53427.1"/>
    <property type="molecule type" value="mRNA"/>
</dbReference>
<dbReference type="PIR" id="I45858">
    <property type="entry name" value="I45858"/>
</dbReference>
<dbReference type="PIR" id="S38589">
    <property type="entry name" value="S38589"/>
</dbReference>
<dbReference type="SMR" id="Q28060"/>
<dbReference type="FunCoup" id="Q28060">
    <property type="interactions" value="56"/>
</dbReference>
<dbReference type="STRING" id="9913.ENSBTAP00000020274"/>
<dbReference type="GlyCosmos" id="Q28060">
    <property type="glycosylation" value="4 sites, No reported glycans"/>
</dbReference>
<dbReference type="GlyGen" id="Q28060">
    <property type="glycosylation" value="4 sites"/>
</dbReference>
<dbReference type="PaxDb" id="9913-ENSBTAP00000020274"/>
<dbReference type="eggNOG" id="KOG3594">
    <property type="taxonomic scope" value="Eukaryota"/>
</dbReference>
<dbReference type="InParanoid" id="Q28060"/>
<dbReference type="Proteomes" id="UP000009136">
    <property type="component" value="Unplaced"/>
</dbReference>
<dbReference type="GO" id="GO:0030057">
    <property type="term" value="C:desmosome"/>
    <property type="evidence" value="ECO:0000318"/>
    <property type="project" value="GO_Central"/>
</dbReference>
<dbReference type="GO" id="GO:0005886">
    <property type="term" value="C:plasma membrane"/>
    <property type="evidence" value="ECO:0007669"/>
    <property type="project" value="UniProtKB-SubCell"/>
</dbReference>
<dbReference type="GO" id="GO:0005509">
    <property type="term" value="F:calcium ion binding"/>
    <property type="evidence" value="ECO:0000318"/>
    <property type="project" value="GO_Central"/>
</dbReference>
<dbReference type="GO" id="GO:0098609">
    <property type="term" value="P:cell-cell adhesion"/>
    <property type="evidence" value="ECO:0000318"/>
    <property type="project" value="GO_Central"/>
</dbReference>
<dbReference type="GO" id="GO:0007156">
    <property type="term" value="P:homophilic cell adhesion via plasma membrane adhesion molecules"/>
    <property type="evidence" value="ECO:0007669"/>
    <property type="project" value="InterPro"/>
</dbReference>
<dbReference type="CDD" id="cd11304">
    <property type="entry name" value="Cadherin_repeat"/>
    <property type="match status" value="3"/>
</dbReference>
<dbReference type="FunFam" id="2.60.40.60:FF:000011">
    <property type="entry name" value="Cadherin 1"/>
    <property type="match status" value="1"/>
</dbReference>
<dbReference type="FunFam" id="2.60.40.60:FF:000019">
    <property type="entry name" value="Cadherin 2"/>
    <property type="match status" value="1"/>
</dbReference>
<dbReference type="FunFam" id="2.60.40.60:FF:000027">
    <property type="entry name" value="Cadherin 2"/>
    <property type="match status" value="1"/>
</dbReference>
<dbReference type="FunFam" id="2.60.40.60:FF:000031">
    <property type="entry name" value="Cadherin 3"/>
    <property type="match status" value="1"/>
</dbReference>
<dbReference type="FunFam" id="2.60.40.60:FF:000091">
    <property type="entry name" value="Desmocollin 1"/>
    <property type="match status" value="1"/>
</dbReference>
<dbReference type="FunFam" id="2.60.40.60:FF:000096">
    <property type="entry name" value="Desmocollin 2"/>
    <property type="match status" value="1"/>
</dbReference>
<dbReference type="FunFam" id="4.10.900.10:FF:000005">
    <property type="entry name" value="Desmocollin 2"/>
    <property type="match status" value="1"/>
</dbReference>
<dbReference type="Gene3D" id="2.60.40.60">
    <property type="entry name" value="Cadherins"/>
    <property type="match status" value="6"/>
</dbReference>
<dbReference type="Gene3D" id="4.10.900.10">
    <property type="entry name" value="TCF3-CBD (Catenin binding domain)"/>
    <property type="match status" value="1"/>
</dbReference>
<dbReference type="InterPro" id="IPR050971">
    <property type="entry name" value="Cadherin-domain_protein"/>
</dbReference>
<dbReference type="InterPro" id="IPR002126">
    <property type="entry name" value="Cadherin-like_dom"/>
</dbReference>
<dbReference type="InterPro" id="IPR015919">
    <property type="entry name" value="Cadherin-like_sf"/>
</dbReference>
<dbReference type="InterPro" id="IPR020894">
    <property type="entry name" value="Cadherin_CS"/>
</dbReference>
<dbReference type="InterPro" id="IPR014868">
    <property type="entry name" value="Cadherin_pro_dom"/>
</dbReference>
<dbReference type="InterPro" id="IPR000233">
    <property type="entry name" value="Cadherin_Y-type_LIR"/>
</dbReference>
<dbReference type="InterPro" id="IPR027397">
    <property type="entry name" value="Catenin-bd_sf"/>
</dbReference>
<dbReference type="InterPro" id="IPR009122">
    <property type="entry name" value="Desmosomal_cadherin"/>
</dbReference>
<dbReference type="PANTHER" id="PTHR24025:SF12">
    <property type="entry name" value="DESMOCOLLIN-3"/>
    <property type="match status" value="1"/>
</dbReference>
<dbReference type="PANTHER" id="PTHR24025">
    <property type="entry name" value="DESMOGLEIN FAMILY MEMBER"/>
    <property type="match status" value="1"/>
</dbReference>
<dbReference type="Pfam" id="PF01049">
    <property type="entry name" value="CADH_Y-type_LIR"/>
    <property type="match status" value="1"/>
</dbReference>
<dbReference type="Pfam" id="PF00028">
    <property type="entry name" value="Cadherin"/>
    <property type="match status" value="4"/>
</dbReference>
<dbReference type="Pfam" id="PF08758">
    <property type="entry name" value="Cadherin_pro"/>
    <property type="match status" value="1"/>
</dbReference>
<dbReference type="PRINTS" id="PR00205">
    <property type="entry name" value="CADHERIN"/>
</dbReference>
<dbReference type="PRINTS" id="PR01818">
    <property type="entry name" value="DESMOCADHERN"/>
</dbReference>
<dbReference type="PRINTS" id="PR01820">
    <property type="entry name" value="DESMOCOLLIN"/>
</dbReference>
<dbReference type="SMART" id="SM00112">
    <property type="entry name" value="CA"/>
    <property type="match status" value="5"/>
</dbReference>
<dbReference type="SMART" id="SM01055">
    <property type="entry name" value="Cadherin_pro"/>
    <property type="match status" value="1"/>
</dbReference>
<dbReference type="SUPFAM" id="SSF49313">
    <property type="entry name" value="Cadherin-like"/>
    <property type="match status" value="6"/>
</dbReference>
<dbReference type="PROSITE" id="PS00232">
    <property type="entry name" value="CADHERIN_1"/>
    <property type="match status" value="3"/>
</dbReference>
<dbReference type="PROSITE" id="PS50268">
    <property type="entry name" value="CADHERIN_2"/>
    <property type="match status" value="5"/>
</dbReference>
<sequence>MAAPGSGAPCAELCRQLLLTLVVFSFACEACKKEIFNIPSKLEADKMIGRVNLKECLGSVDRIQSSDPDFRVLEDGSVYTAHAVVLSDEKRSFTIWLSDTEKRTQKEILVLLEYQKKVLKKRHTKETVLRRSKRRWAPIPCSMQENSLGPFPLFLQQVQSDAAQNYTIFYSISGRGVDKEPLNLFFIERDTGNLYCTQPVDREEYDVFDLIAYASTADGYSADFPLPLPIRVEDENDNHPIFTEAVYNFEVPESSRVGTTVGVVCATDRDEPDTMHTRLKYSILEQTPRSPGLFSVHPSTGVITTVSHYLDREVADKYSLIMKVQDMDGQFFGLMSTATCIITVKDSNDNLPTFRQNAYEASVEENTVNVEILRIPVEDKDLINTANWRANFTILKGNENGHFKITTDKATNEGVLSVVKPLDYEESHQVVLEIGVANEAPFTRDVALRMTTMNRAVVTVHVKDQDEGPECSPEVQYIRIKENSAVGSKISGYKAYDPETKSSSGLRYKILHDPKEWITVNEGSGSLETYKTLDREVITPKNDLYNITVLAIDQDGRSCTGTLAVSIEDVNDNPPEILQDYLVICKGNMDYVDISAIDHDSSINGAPFYFSLANTSPEINRLWTITRVNDTAARLAYQKNAQFQEYFIPVAVKDRAGLSATKTLRVNLCDCTNPVQCRAARRSADVILGKWAILAILLGIALLFSILLTLVCGIVSARNKKAFPDDLAQQNLIISNTEAPGDDKVCSANGFMTQTVNNANQGFCGTMGSGVKNGGQESIEMVKGGQQTLESCRGAGHHHTLDSCRGGTIEVENSRYTYSEWQNFTQPRLGEKLHLCNQDEEHMPSQDYVLTYNYEGRGSPAGSVGCCSEKQEEDGLDFLNNLEAKFAALAKTCTKR</sequence>
<accession>Q28060</accession>
<accession>Q28061</accession>
<accession>Q28176</accession>
<reference key="1">
    <citation type="journal article" date="1995" name="J. Cell Sci.">
        <title>Characterisation of a desmocollin isoform (bovine DSC3) exclusively expressed in lower layers of stratified epithelia.</title>
        <authorList>
            <person name="Yue K.K.M."/>
            <person name="Holton J.L."/>
            <person name="Clarke J.P."/>
            <person name="Hyam J.L.M."/>
            <person name="Hashimoto T."/>
            <person name="Chidgey M.A.J."/>
            <person name="Garrod D.R."/>
        </authorList>
    </citation>
    <scope>NUCLEOTIDE SEQUENCE [MRNA]</scope>
    <scope>TISSUE SPECIFICITY</scope>
</reference>
<reference key="2">
    <citation type="journal article" date="1994" name="J. Cell Biol.">
        <title>The bovine desmocollin family: a new gene and expression patterns reflecting epithelial cell proliferation and differentiation.</title>
        <authorList>
            <person name="Legan P.K."/>
            <person name="Yue K.K.M."/>
            <person name="Chidgey M.A.J."/>
            <person name="Holton J.L."/>
            <person name="Wilkinson R.W."/>
            <person name="Garrod D.R."/>
        </authorList>
    </citation>
    <scope>NUCLEOTIDE SEQUENCE [MRNA] OF 686-814</scope>
    <source>
        <tissue>Epidermis</tissue>
    </source>
</reference>
<evidence type="ECO:0000250" key="1"/>
<evidence type="ECO:0000250" key="2">
    <source>
        <dbReference type="UniProtKB" id="P55850"/>
    </source>
</evidence>
<evidence type="ECO:0000250" key="3">
    <source>
        <dbReference type="UniProtKB" id="Q14574"/>
    </source>
</evidence>
<evidence type="ECO:0000255" key="4"/>
<evidence type="ECO:0000255" key="5">
    <source>
        <dbReference type="PROSITE-ProRule" id="PRU00043"/>
    </source>
</evidence>
<evidence type="ECO:0000269" key="6">
    <source>
    </source>
</evidence>
<evidence type="ECO:0000305" key="7"/>
<gene>
    <name type="primary">DSC3</name>
</gene>
<keyword id="KW-0025">Alternative splicing</keyword>
<keyword id="KW-0106">Calcium</keyword>
<keyword id="KW-0130">Cell adhesion</keyword>
<keyword id="KW-0965">Cell junction</keyword>
<keyword id="KW-1003">Cell membrane</keyword>
<keyword id="KW-0165">Cleavage on pair of basic residues</keyword>
<keyword id="KW-0963">Cytoplasm</keyword>
<keyword id="KW-0325">Glycoprotein</keyword>
<keyword id="KW-0472">Membrane</keyword>
<keyword id="KW-0479">Metal-binding</keyword>
<keyword id="KW-1185">Reference proteome</keyword>
<keyword id="KW-0677">Repeat</keyword>
<keyword id="KW-0732">Signal</keyword>
<keyword id="KW-0812">Transmembrane</keyword>
<keyword id="KW-1133">Transmembrane helix</keyword>
<name>DSC3_BOVIN</name>
<comment type="function">
    <text evidence="2 3">A component of desmosome cell-cell junctions which are required for positive regulation of cellular adhesion (By similarity). Required for cell-cell adhesion in the epidermis, as a result required for the maintenance of the dermal cohesion and the dermal barrier function (By similarity). Required for cell-cell adhesion of epithelial cell layers surrounding the telogen hair club, as a result plays an important role in telogen hair shaft anchorage (By similarity). Essential for successful completion of embryo compaction and embryo development (By similarity).</text>
</comment>
<comment type="subunit">
    <text evidence="3">May form homodimers (By similarity). Interacts with DSG1; there is evidence to suggest that the interaction promotes cell-cell adhesion of keratinocytes (By similarity).</text>
</comment>
<comment type="subcellular location">
    <subcellularLocation>
        <location evidence="2">Cell membrane</location>
        <topology evidence="7">Single-pass type I membrane protein</topology>
    </subcellularLocation>
    <subcellularLocation>
        <location evidence="2">Cell junction</location>
        <location evidence="2">Desmosome</location>
    </subcellularLocation>
    <subcellularLocation>
        <location evidence="2">Cytoplasm</location>
    </subcellularLocation>
    <text evidence="2">Expressed in the cytoplasm and at the cell membrane of oocytes.</text>
</comment>
<comment type="alternative products">
    <event type="alternative splicing"/>
    <isoform>
        <id>Q28060-1</id>
        <name>3A</name>
        <sequence type="displayed"/>
    </isoform>
    <isoform>
        <id>Q28060-2</id>
        <name>3B</name>
        <sequence type="described" ref="VSP_000661 VSP_000662"/>
    </isoform>
</comment>
<comment type="tissue specificity">
    <text evidence="6">Expressed in stratified epithelia only, such as the epidermis, tongue, esophagus and rumen (at protein level).</text>
</comment>
<comment type="domain">
    <text evidence="7">Calcium may be bound by the cadherin-like repeats.</text>
</comment>
<comment type="domain">
    <text evidence="1">Three calcium ions are usually bound at the interface of each cadherin domain and rigidify the connections, imparting a strong curvature to the full-length ectodomain.</text>
</comment>
<feature type="signal peptide" evidence="4">
    <location>
        <begin position="1"/>
        <end position="26"/>
    </location>
</feature>
<feature type="propeptide" id="PRO_0000003873" evidence="4">
    <location>
        <begin position="27"/>
        <end position="134"/>
    </location>
</feature>
<feature type="chain" id="PRO_0000003874" description="Desmocollin-3">
    <location>
        <begin position="135"/>
        <end position="896"/>
    </location>
</feature>
<feature type="topological domain" description="Extracellular" evidence="4">
    <location>
        <begin position="135"/>
        <end position="690"/>
    </location>
</feature>
<feature type="transmembrane region" description="Helical" evidence="4">
    <location>
        <begin position="691"/>
        <end position="711"/>
    </location>
</feature>
<feature type="topological domain" description="Cytoplasmic" evidence="4">
    <location>
        <begin position="712"/>
        <end position="896"/>
    </location>
</feature>
<feature type="domain" description="Cadherin 1" evidence="5">
    <location>
        <begin position="135"/>
        <end position="242"/>
    </location>
</feature>
<feature type="domain" description="Cadherin 2" evidence="5">
    <location>
        <begin position="243"/>
        <end position="354"/>
    </location>
</feature>
<feature type="domain" description="Cadherin 3" evidence="5">
    <location>
        <begin position="355"/>
        <end position="471"/>
    </location>
</feature>
<feature type="domain" description="Cadherin 4" evidence="5">
    <location>
        <begin position="472"/>
        <end position="579"/>
    </location>
</feature>
<feature type="domain" description="Cadherin 5" evidence="5">
    <location>
        <begin position="580"/>
        <end position="690"/>
    </location>
</feature>
<feature type="glycosylation site" description="N-linked (GlcNAc...) asparagine" evidence="4">
    <location>
        <position position="165"/>
    </location>
</feature>
<feature type="glycosylation site" description="N-linked (GlcNAc...) asparagine" evidence="4">
    <location>
        <position position="391"/>
    </location>
</feature>
<feature type="glycosylation site" description="N-linked (GlcNAc...) asparagine" evidence="4">
    <location>
        <position position="546"/>
    </location>
</feature>
<feature type="glycosylation site" description="N-linked (GlcNAc...) asparagine" evidence="4">
    <location>
        <position position="629"/>
    </location>
</feature>
<feature type="splice variant" id="VSP_000661" description="In isoform 3B." evidence="7">
    <original>KLHLCNQD</original>
    <variation>ESIRGHTG</variation>
    <location>
        <begin position="832"/>
        <end position="839"/>
    </location>
</feature>
<feature type="splice variant" id="VSP_000662" description="In isoform 3B." evidence="7">
    <location>
        <begin position="840"/>
        <end position="896"/>
    </location>
</feature>
<feature type="sequence conflict" description="In Ref. 2; CAA53427." evidence="7" ref="2">
    <original>VI</original>
    <variation>EF</variation>
    <location>
        <begin position="686"/>
        <end position="687"/>
    </location>
</feature>
<organism>
    <name type="scientific">Bos taurus</name>
    <name type="common">Bovine</name>
    <dbReference type="NCBI Taxonomy" id="9913"/>
    <lineage>
        <taxon>Eukaryota</taxon>
        <taxon>Metazoa</taxon>
        <taxon>Chordata</taxon>
        <taxon>Craniata</taxon>
        <taxon>Vertebrata</taxon>
        <taxon>Euteleostomi</taxon>
        <taxon>Mammalia</taxon>
        <taxon>Eutheria</taxon>
        <taxon>Laurasiatheria</taxon>
        <taxon>Artiodactyla</taxon>
        <taxon>Ruminantia</taxon>
        <taxon>Pecora</taxon>
        <taxon>Bovidae</taxon>
        <taxon>Bovinae</taxon>
        <taxon>Bos</taxon>
    </lineage>
</organism>